<evidence type="ECO:0000255" key="1"/>
<evidence type="ECO:0000305" key="2"/>
<comment type="function">
    <text>Unknown. Candidate gene encoding tumor antigens.</text>
</comment>
<comment type="subcellular location">
    <subcellularLocation>
        <location evidence="2">Secreted</location>
    </subcellularLocation>
</comment>
<comment type="tissue specificity">
    <text>Not expressed in normal tissues except in testis. Expressed in 22% of melanomas, in bladder and lung carcinomas.</text>
</comment>
<comment type="miscellaneous">
    <text>The ancestral BAGE gene was generated by juxtacentromeric reshuffling of the KMT2C/MLL3 gene. The BAGE family was expanded by juxtacentromeric movement and/or acrocentric exchanges. BAGE family is composed of expressed genes that map to the juxtacentromeric regions of chromosomes 13 and 21 and of unexpressed gene fragments that scattered in the juxtacentromeric regions of several chromosomes, including chromosomes 9, 13, 18 and 21.</text>
</comment>
<comment type="similarity">
    <text evidence="2">Belongs to the BAGE family.</text>
</comment>
<organism>
    <name type="scientific">Homo sapiens</name>
    <name type="common">Human</name>
    <dbReference type="NCBI Taxonomy" id="9606"/>
    <lineage>
        <taxon>Eukaryota</taxon>
        <taxon>Metazoa</taxon>
        <taxon>Chordata</taxon>
        <taxon>Craniata</taxon>
        <taxon>Vertebrata</taxon>
        <taxon>Euteleostomi</taxon>
        <taxon>Mammalia</taxon>
        <taxon>Eutheria</taxon>
        <taxon>Euarchontoglires</taxon>
        <taxon>Primates</taxon>
        <taxon>Haplorrhini</taxon>
        <taxon>Catarrhini</taxon>
        <taxon>Hominidae</taxon>
        <taxon>Homo</taxon>
    </lineage>
</organism>
<gene>
    <name type="primary">BAGE2</name>
</gene>
<name>BAGE2_HUMAN</name>
<keyword id="KW-1185">Reference proteome</keyword>
<keyword id="KW-0964">Secreted</keyword>
<keyword id="KW-0732">Signal</keyword>
<reference key="1">
    <citation type="journal article" date="2002" name="Eur. J. Hum. Genet.">
        <title>New BAGE (B melanoma antigen) genes mapping to the juxtacentromeric regions of human chromosomes 13 and 21 have a cancer/testis expression profile.</title>
        <authorList>
            <person name="Ruault M."/>
            <person name="van der Bruggen P."/>
            <person name="Brun M.-E."/>
            <person name="Boyle S."/>
            <person name="Roizes G."/>
            <person name="De Sario A."/>
        </authorList>
    </citation>
    <scope>NUCLEOTIDE SEQUENCE [MRNA]</scope>
    <source>
        <tissue>Testis</tissue>
    </source>
</reference>
<reference key="2">
    <citation type="journal article" date="2003" name="Genomics">
        <title>BAGE genes generated by juxtacentromeric reshuffling in the hominidae lineage are under selective pressure.</title>
        <authorList>
            <person name="Ruault M."/>
            <person name="Ventura M."/>
            <person name="Galtier N."/>
            <person name="Brun M.-E."/>
            <person name="Archidiacono N."/>
            <person name="Roizes G."/>
            <person name="De Sario A."/>
        </authorList>
    </citation>
    <scope>NUCLEOTIDE SEQUENCE [MRNA]</scope>
    <source>
        <tissue>Testis</tissue>
    </source>
</reference>
<reference key="3">
    <citation type="journal article" date="2004" name="Nat. Genet.">
        <title>Complete sequencing and characterization of 21,243 full-length human cDNAs.</title>
        <authorList>
            <person name="Ota T."/>
            <person name="Suzuki Y."/>
            <person name="Nishikawa T."/>
            <person name="Otsuki T."/>
            <person name="Sugiyama T."/>
            <person name="Irie R."/>
            <person name="Wakamatsu A."/>
            <person name="Hayashi K."/>
            <person name="Sato H."/>
            <person name="Nagai K."/>
            <person name="Kimura K."/>
            <person name="Makita H."/>
            <person name="Sekine M."/>
            <person name="Obayashi M."/>
            <person name="Nishi T."/>
            <person name="Shibahara T."/>
            <person name="Tanaka T."/>
            <person name="Ishii S."/>
            <person name="Yamamoto J."/>
            <person name="Saito K."/>
            <person name="Kawai Y."/>
            <person name="Isono Y."/>
            <person name="Nakamura Y."/>
            <person name="Nagahari K."/>
            <person name="Murakami K."/>
            <person name="Yasuda T."/>
            <person name="Iwayanagi T."/>
            <person name="Wagatsuma M."/>
            <person name="Shiratori A."/>
            <person name="Sudo H."/>
            <person name="Hosoiri T."/>
            <person name="Kaku Y."/>
            <person name="Kodaira H."/>
            <person name="Kondo H."/>
            <person name="Sugawara M."/>
            <person name="Takahashi M."/>
            <person name="Kanda K."/>
            <person name="Yokoi T."/>
            <person name="Furuya T."/>
            <person name="Kikkawa E."/>
            <person name="Omura Y."/>
            <person name="Abe K."/>
            <person name="Kamihara K."/>
            <person name="Katsuta N."/>
            <person name="Sato K."/>
            <person name="Tanikawa M."/>
            <person name="Yamazaki M."/>
            <person name="Ninomiya K."/>
            <person name="Ishibashi T."/>
            <person name="Yamashita H."/>
            <person name="Murakawa K."/>
            <person name="Fujimori K."/>
            <person name="Tanai H."/>
            <person name="Kimata M."/>
            <person name="Watanabe M."/>
            <person name="Hiraoka S."/>
            <person name="Chiba Y."/>
            <person name="Ishida S."/>
            <person name="Ono Y."/>
            <person name="Takiguchi S."/>
            <person name="Watanabe S."/>
            <person name="Yosida M."/>
            <person name="Hotuta T."/>
            <person name="Kusano J."/>
            <person name="Kanehori K."/>
            <person name="Takahashi-Fujii A."/>
            <person name="Hara H."/>
            <person name="Tanase T.-O."/>
            <person name="Nomura Y."/>
            <person name="Togiya S."/>
            <person name="Komai F."/>
            <person name="Hara R."/>
            <person name="Takeuchi K."/>
            <person name="Arita M."/>
            <person name="Imose N."/>
            <person name="Musashino K."/>
            <person name="Yuuki H."/>
            <person name="Oshima A."/>
            <person name="Sasaki N."/>
            <person name="Aotsuka S."/>
            <person name="Yoshikawa Y."/>
            <person name="Matsunawa H."/>
            <person name="Ichihara T."/>
            <person name="Shiohata N."/>
            <person name="Sano S."/>
            <person name="Moriya S."/>
            <person name="Momiyama H."/>
            <person name="Satoh N."/>
            <person name="Takami S."/>
            <person name="Terashima Y."/>
            <person name="Suzuki O."/>
            <person name="Nakagawa S."/>
            <person name="Senoh A."/>
            <person name="Mizoguchi H."/>
            <person name="Goto Y."/>
            <person name="Shimizu F."/>
            <person name="Wakebe H."/>
            <person name="Hishigaki H."/>
            <person name="Watanabe T."/>
            <person name="Sugiyama A."/>
            <person name="Takemoto M."/>
            <person name="Kawakami B."/>
            <person name="Yamazaki M."/>
            <person name="Watanabe K."/>
            <person name="Kumagai A."/>
            <person name="Itakura S."/>
            <person name="Fukuzumi Y."/>
            <person name="Fujimori Y."/>
            <person name="Komiyama M."/>
            <person name="Tashiro H."/>
            <person name="Tanigami A."/>
            <person name="Fujiwara T."/>
            <person name="Ono T."/>
            <person name="Yamada K."/>
            <person name="Fujii Y."/>
            <person name="Ozaki K."/>
            <person name="Hirao M."/>
            <person name="Ohmori Y."/>
            <person name="Kawabata A."/>
            <person name="Hikiji T."/>
            <person name="Kobatake N."/>
            <person name="Inagaki H."/>
            <person name="Ikema Y."/>
            <person name="Okamoto S."/>
            <person name="Okitani R."/>
            <person name="Kawakami T."/>
            <person name="Noguchi S."/>
            <person name="Itoh T."/>
            <person name="Shigeta K."/>
            <person name="Senba T."/>
            <person name="Matsumura K."/>
            <person name="Nakajima Y."/>
            <person name="Mizuno T."/>
            <person name="Morinaga M."/>
            <person name="Sasaki M."/>
            <person name="Togashi T."/>
            <person name="Oyama M."/>
            <person name="Hata H."/>
            <person name="Watanabe M."/>
            <person name="Komatsu T."/>
            <person name="Mizushima-Sugano J."/>
            <person name="Satoh T."/>
            <person name="Shirai Y."/>
            <person name="Takahashi Y."/>
            <person name="Nakagawa K."/>
            <person name="Okumura K."/>
            <person name="Nagase T."/>
            <person name="Nomura N."/>
            <person name="Kikuchi H."/>
            <person name="Masuho Y."/>
            <person name="Yamashita R."/>
            <person name="Nakai K."/>
            <person name="Yada T."/>
            <person name="Nakamura Y."/>
            <person name="Ohara O."/>
            <person name="Isogai T."/>
            <person name="Sugano S."/>
        </authorList>
    </citation>
    <scope>NUCLEOTIDE SEQUENCE [LARGE SCALE MRNA]</scope>
    <source>
        <tissue>Testis</tissue>
    </source>
</reference>
<reference key="4">
    <citation type="journal article" date="2004" name="Genome Res.">
        <title>The status, quality, and expansion of the NIH full-length cDNA project: the Mammalian Gene Collection (MGC).</title>
        <authorList>
            <consortium name="The MGC Project Team"/>
        </authorList>
    </citation>
    <scope>NUCLEOTIDE SEQUENCE [LARGE SCALE MRNA]</scope>
</reference>
<sequence>MAAGVVFLALSAQLLQARLMKEESPVVSWRLEPEDGTALDVHFVSTLEPLSNAVKRNVPRCIIILVLQEPTAFRISVTSSCFVQNTLTKLLKDRRKMQTVQCATARETS</sequence>
<accession>Q86Y30</accession>
<accession>A8K925</accession>
<accession>Q08ER0</accession>
<proteinExistence type="evidence at transcript level"/>
<feature type="signal peptide" evidence="1">
    <location>
        <begin position="1"/>
        <end position="17"/>
    </location>
</feature>
<feature type="chain" id="PRO_0000020775" description="B melanoma antigen 2">
    <location>
        <begin position="18"/>
        <end position="109"/>
    </location>
</feature>
<feature type="sequence variant" id="VAR_059585" description="In dbSNP:rs2740327.">
    <original>R</original>
    <variation>T</variation>
    <location>
        <position position="95"/>
    </location>
</feature>
<feature type="sequence variant" id="VAR_059586" description="In dbSNP:rs9808647.">
    <original>R</original>
    <variation>Q</variation>
    <location>
        <position position="106"/>
    </location>
</feature>
<protein>
    <recommendedName>
        <fullName>B melanoma antigen 2</fullName>
    </recommendedName>
    <alternativeName>
        <fullName>Cancer/testis antigen 2.2</fullName>
        <shortName>CT2.2</shortName>
    </alternativeName>
</protein>
<dbReference type="EMBL" id="AF218570">
    <property type="protein sequence ID" value="AAL55648.1"/>
    <property type="molecule type" value="mRNA"/>
</dbReference>
<dbReference type="EMBL" id="AK292540">
    <property type="protein sequence ID" value="BAF85229.1"/>
    <property type="molecule type" value="mRNA"/>
</dbReference>
<dbReference type="EMBL" id="BC101132">
    <property type="protein sequence ID" value="AAI01133.1"/>
    <property type="molecule type" value="mRNA"/>
</dbReference>
<dbReference type="EMBL" id="BC101133">
    <property type="protein sequence ID" value="AAI01134.1"/>
    <property type="molecule type" value="mRNA"/>
</dbReference>
<dbReference type="BioMuta" id="HGNC:15723"/>
<dbReference type="DMDM" id="37537781"/>
<dbReference type="MassIVE" id="Q86Y30"/>
<dbReference type="AGR" id="HGNC:15723"/>
<dbReference type="GeneCards" id="BAGE2"/>
<dbReference type="HGNC" id="HGNC:15723">
    <property type="gene designation" value="BAGE2"/>
</dbReference>
<dbReference type="MIM" id="617776">
    <property type="type" value="gene"/>
</dbReference>
<dbReference type="neXtProt" id="NX_Q86Y30"/>
<dbReference type="eggNOG" id="ENOG502TMVN">
    <property type="taxonomic scope" value="Eukaryota"/>
</dbReference>
<dbReference type="InParanoid" id="Q86Y30"/>
<dbReference type="ChiTaRS" id="BAGE2">
    <property type="organism name" value="human"/>
</dbReference>
<dbReference type="Pharos" id="Q86Y30">
    <property type="development level" value="Tdark"/>
</dbReference>
<dbReference type="PRO" id="PR:Q86Y30"/>
<dbReference type="Proteomes" id="UP000005640">
    <property type="component" value="Unplaced"/>
</dbReference>
<dbReference type="RNAct" id="Q86Y30">
    <property type="molecule type" value="protein"/>
</dbReference>
<dbReference type="GO" id="GO:0005576">
    <property type="term" value="C:extracellular region"/>
    <property type="evidence" value="ECO:0007669"/>
    <property type="project" value="UniProtKB-SubCell"/>
</dbReference>
<dbReference type="InterPro" id="IPR012530">
    <property type="entry name" value="BAGE-like"/>
</dbReference>
<dbReference type="Pfam" id="PF08180">
    <property type="entry name" value="BAGE"/>
    <property type="match status" value="1"/>
</dbReference>